<keyword id="KW-0067">ATP-binding</keyword>
<keyword id="KW-0997">Cell inner membrane</keyword>
<keyword id="KW-1003">Cell membrane</keyword>
<keyword id="KW-0472">Membrane</keyword>
<keyword id="KW-0547">Nucleotide-binding</keyword>
<keyword id="KW-1278">Translocase</keyword>
<keyword id="KW-0813">Transport</keyword>
<sequence length="381" mass="42583">MTQTALNIGTTLNKTKNDVELRKVFKVFEGHTAVKGVDFNIRQGEFFSILGPSGCGKTTTLRLIAGFETPSAGEIIIRGQSMSQTPAYRRPVNTVFQSYALFNHLSVKDNIAFGLRIKRLGKTETEEKVAQALQLVKMEKFADRYPNQISGGQQQRVALARALVNRPAVLLLDEPLGALDLKLRKQMQMELSNIHKDLGVTFVMVTHDQQEAMSMSDRIAVMHEGRIEQIGSPQEIYECPESPFVADFIGDTNLFQGCVEYNNNSSLVVKTDSGLNISAEYKKVNGKNGEIYGGTSVVLSVRPEKVNLSLYPPDVSENCFEGRLRNVMYMGTHVHYQVNLLSGDQMMVRQPNTERTLPNLDTPMYVYWSKQNCLALSESKS</sequence>
<name>POTA_TRIEI</name>
<gene>
    <name evidence="1" type="primary">potA</name>
    <name type="ordered locus">Tery_2805</name>
</gene>
<feature type="chain" id="PRO_0000286321" description="Spermidine/putrescine import ATP-binding protein PotA">
    <location>
        <begin position="1"/>
        <end position="381"/>
    </location>
</feature>
<feature type="domain" description="ABC transporter" evidence="1">
    <location>
        <begin position="19"/>
        <end position="249"/>
    </location>
</feature>
<feature type="binding site" evidence="1">
    <location>
        <begin position="51"/>
        <end position="58"/>
    </location>
    <ligand>
        <name>ATP</name>
        <dbReference type="ChEBI" id="CHEBI:30616"/>
    </ligand>
</feature>
<dbReference type="EC" id="7.6.2.11" evidence="1"/>
<dbReference type="EMBL" id="CP000393">
    <property type="protein sequence ID" value="ABG51981.1"/>
    <property type="molecule type" value="Genomic_DNA"/>
</dbReference>
<dbReference type="RefSeq" id="WP_011612342.1">
    <property type="nucleotide sequence ID" value="NC_008312.1"/>
</dbReference>
<dbReference type="SMR" id="Q110U3"/>
<dbReference type="STRING" id="203124.Tery_2805"/>
<dbReference type="KEGG" id="ter:Tery_2805"/>
<dbReference type="eggNOG" id="COG3842">
    <property type="taxonomic scope" value="Bacteria"/>
</dbReference>
<dbReference type="HOGENOM" id="CLU_000604_1_1_3"/>
<dbReference type="OrthoDB" id="508245at2"/>
<dbReference type="GO" id="GO:0043190">
    <property type="term" value="C:ATP-binding cassette (ABC) transporter complex"/>
    <property type="evidence" value="ECO:0007669"/>
    <property type="project" value="InterPro"/>
</dbReference>
<dbReference type="GO" id="GO:0015594">
    <property type="term" value="F:ABC-type putrescine transporter activity"/>
    <property type="evidence" value="ECO:0007669"/>
    <property type="project" value="InterPro"/>
</dbReference>
<dbReference type="GO" id="GO:0005524">
    <property type="term" value="F:ATP binding"/>
    <property type="evidence" value="ECO:0007669"/>
    <property type="project" value="UniProtKB-KW"/>
</dbReference>
<dbReference type="GO" id="GO:0016887">
    <property type="term" value="F:ATP hydrolysis activity"/>
    <property type="evidence" value="ECO:0007669"/>
    <property type="project" value="InterPro"/>
</dbReference>
<dbReference type="CDD" id="cd03300">
    <property type="entry name" value="ABC_PotA_N"/>
    <property type="match status" value="1"/>
</dbReference>
<dbReference type="FunFam" id="3.40.50.300:FF:000133">
    <property type="entry name" value="Spermidine/putrescine import ATP-binding protein PotA"/>
    <property type="match status" value="1"/>
</dbReference>
<dbReference type="Gene3D" id="2.40.50.100">
    <property type="match status" value="1"/>
</dbReference>
<dbReference type="Gene3D" id="3.40.50.300">
    <property type="entry name" value="P-loop containing nucleotide triphosphate hydrolases"/>
    <property type="match status" value="1"/>
</dbReference>
<dbReference type="InterPro" id="IPR003593">
    <property type="entry name" value="AAA+_ATPase"/>
</dbReference>
<dbReference type="InterPro" id="IPR050093">
    <property type="entry name" value="ABC_SmlMolc_Importer"/>
</dbReference>
<dbReference type="InterPro" id="IPR003439">
    <property type="entry name" value="ABC_transporter-like_ATP-bd"/>
</dbReference>
<dbReference type="InterPro" id="IPR017871">
    <property type="entry name" value="ABC_transporter-like_CS"/>
</dbReference>
<dbReference type="InterPro" id="IPR008995">
    <property type="entry name" value="Mo/tungstate-bd_C_term_dom"/>
</dbReference>
<dbReference type="InterPro" id="IPR027417">
    <property type="entry name" value="P-loop_NTPase"/>
</dbReference>
<dbReference type="InterPro" id="IPR005893">
    <property type="entry name" value="PotA-like"/>
</dbReference>
<dbReference type="InterPro" id="IPR017879">
    <property type="entry name" value="PotA_ATP-bd"/>
</dbReference>
<dbReference type="InterPro" id="IPR013611">
    <property type="entry name" value="Transp-assoc_OB_typ2"/>
</dbReference>
<dbReference type="NCBIfam" id="TIGR01187">
    <property type="entry name" value="potA"/>
    <property type="match status" value="1"/>
</dbReference>
<dbReference type="PANTHER" id="PTHR42781">
    <property type="entry name" value="SPERMIDINE/PUTRESCINE IMPORT ATP-BINDING PROTEIN POTA"/>
    <property type="match status" value="1"/>
</dbReference>
<dbReference type="PANTHER" id="PTHR42781:SF4">
    <property type="entry name" value="SPERMIDINE_PUTRESCINE IMPORT ATP-BINDING PROTEIN POTA"/>
    <property type="match status" value="1"/>
</dbReference>
<dbReference type="Pfam" id="PF00005">
    <property type="entry name" value="ABC_tran"/>
    <property type="match status" value="1"/>
</dbReference>
<dbReference type="Pfam" id="PF08402">
    <property type="entry name" value="TOBE_2"/>
    <property type="match status" value="1"/>
</dbReference>
<dbReference type="SMART" id="SM00382">
    <property type="entry name" value="AAA"/>
    <property type="match status" value="1"/>
</dbReference>
<dbReference type="SUPFAM" id="SSF50331">
    <property type="entry name" value="MOP-like"/>
    <property type="match status" value="1"/>
</dbReference>
<dbReference type="SUPFAM" id="SSF52540">
    <property type="entry name" value="P-loop containing nucleoside triphosphate hydrolases"/>
    <property type="match status" value="1"/>
</dbReference>
<dbReference type="PROSITE" id="PS00211">
    <property type="entry name" value="ABC_TRANSPORTER_1"/>
    <property type="match status" value="1"/>
</dbReference>
<dbReference type="PROSITE" id="PS50893">
    <property type="entry name" value="ABC_TRANSPORTER_2"/>
    <property type="match status" value="1"/>
</dbReference>
<dbReference type="PROSITE" id="PS51305">
    <property type="entry name" value="POTA"/>
    <property type="match status" value="1"/>
</dbReference>
<accession>Q110U3</accession>
<evidence type="ECO:0000255" key="1">
    <source>
        <dbReference type="HAMAP-Rule" id="MF_01726"/>
    </source>
</evidence>
<protein>
    <recommendedName>
        <fullName evidence="1">Spermidine/putrescine import ATP-binding protein PotA</fullName>
        <ecNumber evidence="1">7.6.2.11</ecNumber>
    </recommendedName>
</protein>
<reference key="1">
    <citation type="journal article" date="2015" name="Proc. Natl. Acad. Sci. U.S.A.">
        <title>Trichodesmium genome maintains abundant, widespread noncoding DNA in situ, despite oligotrophic lifestyle.</title>
        <authorList>
            <person name="Walworth N."/>
            <person name="Pfreundt U."/>
            <person name="Nelson W.C."/>
            <person name="Mincer T."/>
            <person name="Heidelberg J.F."/>
            <person name="Fu F."/>
            <person name="Waterbury J.B."/>
            <person name="Glavina del Rio T."/>
            <person name="Goodwin L."/>
            <person name="Kyrpides N.C."/>
            <person name="Land M.L."/>
            <person name="Woyke T."/>
            <person name="Hutchins D.A."/>
            <person name="Hess W.R."/>
            <person name="Webb E.A."/>
        </authorList>
    </citation>
    <scope>NUCLEOTIDE SEQUENCE [LARGE SCALE GENOMIC DNA]</scope>
    <source>
        <strain>IMS101</strain>
    </source>
</reference>
<comment type="function">
    <text evidence="1">Part of the ABC transporter complex PotABCD involved in spermidine/putrescine import. Responsible for energy coupling to the transport system.</text>
</comment>
<comment type="catalytic activity">
    <reaction evidence="1">
        <text>ATP + H2O + polyamine-[polyamine-binding protein]Side 1 = ADP + phosphate + polyamineSide 2 + [polyamine-binding protein]Side 1.</text>
        <dbReference type="EC" id="7.6.2.11"/>
    </reaction>
</comment>
<comment type="subunit">
    <text evidence="1">The complex is composed of two ATP-binding proteins (PotA), two transmembrane proteins (PotB and PotC) and a solute-binding protein (PotD).</text>
</comment>
<comment type="subcellular location">
    <subcellularLocation>
        <location evidence="1">Cell inner membrane</location>
        <topology evidence="1">Peripheral membrane protein</topology>
    </subcellularLocation>
</comment>
<comment type="similarity">
    <text evidence="1">Belongs to the ABC transporter superfamily. Spermidine/putrescine importer (TC 3.A.1.11.1) family.</text>
</comment>
<proteinExistence type="inferred from homology"/>
<organism>
    <name type="scientific">Trichodesmium erythraeum (strain IMS101)</name>
    <dbReference type="NCBI Taxonomy" id="203124"/>
    <lineage>
        <taxon>Bacteria</taxon>
        <taxon>Bacillati</taxon>
        <taxon>Cyanobacteriota</taxon>
        <taxon>Cyanophyceae</taxon>
        <taxon>Oscillatoriophycideae</taxon>
        <taxon>Oscillatoriales</taxon>
        <taxon>Microcoleaceae</taxon>
        <taxon>Trichodesmium</taxon>
    </lineage>
</organism>